<protein>
    <recommendedName>
        <fullName evidence="1">Histidine biosynthesis bifunctional protein HisB</fullName>
    </recommendedName>
    <domain>
        <recommendedName>
            <fullName evidence="1">Histidinol-phosphatase</fullName>
            <ecNumber evidence="1">3.1.3.15</ecNumber>
        </recommendedName>
    </domain>
    <domain>
        <recommendedName>
            <fullName evidence="1">Imidazoleglycerol-phosphate dehydratase</fullName>
            <shortName evidence="1">IGPD</shortName>
            <ecNumber evidence="1">4.2.1.19</ecNumber>
        </recommendedName>
    </domain>
</protein>
<feature type="chain" id="PRO_0000158230" description="Histidine biosynthesis bifunctional protein HisB">
    <location>
        <begin position="1"/>
        <end position="375"/>
    </location>
</feature>
<feature type="region of interest" description="Histidinol-phosphatase" evidence="1">
    <location>
        <begin position="1"/>
        <end position="168"/>
    </location>
</feature>
<feature type="region of interest" description="Imidazoleglycerol-phosphate dehydratase" evidence="1">
    <location>
        <begin position="169"/>
        <end position="375"/>
    </location>
</feature>
<feature type="active site" description="Nucleophile" evidence="1">
    <location>
        <position position="8"/>
    </location>
</feature>
<feature type="active site" description="Proton donor" evidence="1">
    <location>
        <position position="10"/>
    </location>
</feature>
<feature type="binding site" evidence="1">
    <location>
        <position position="8"/>
    </location>
    <ligand>
        <name>Mg(2+)</name>
        <dbReference type="ChEBI" id="CHEBI:18420"/>
    </ligand>
</feature>
<feature type="binding site" evidence="1">
    <location>
        <position position="10"/>
    </location>
    <ligand>
        <name>Mg(2+)</name>
        <dbReference type="ChEBI" id="CHEBI:18420"/>
    </ligand>
</feature>
<feature type="binding site" evidence="1">
    <location>
        <position position="128"/>
    </location>
    <ligand>
        <name>Mg(2+)</name>
        <dbReference type="ChEBI" id="CHEBI:18420"/>
    </ligand>
</feature>
<organism>
    <name type="scientific">Xylella fastidiosa (strain Temecula1 / ATCC 700964)</name>
    <dbReference type="NCBI Taxonomy" id="183190"/>
    <lineage>
        <taxon>Bacteria</taxon>
        <taxon>Pseudomonadati</taxon>
        <taxon>Pseudomonadota</taxon>
        <taxon>Gammaproteobacteria</taxon>
        <taxon>Lysobacterales</taxon>
        <taxon>Lysobacteraceae</taxon>
        <taxon>Xylella</taxon>
    </lineage>
</organism>
<dbReference type="EC" id="3.1.3.15" evidence="1"/>
<dbReference type="EC" id="4.2.1.19" evidence="1"/>
<dbReference type="EMBL" id="AE009442">
    <property type="protein sequence ID" value="AAO29114.1"/>
    <property type="molecule type" value="Genomic_DNA"/>
</dbReference>
<dbReference type="RefSeq" id="WP_004088316.1">
    <property type="nucleotide sequence ID" value="NC_004556.1"/>
</dbReference>
<dbReference type="SMR" id="Q87C31"/>
<dbReference type="GeneID" id="93905076"/>
<dbReference type="KEGG" id="xft:PD_1265"/>
<dbReference type="HOGENOM" id="CLU_044308_0_0_6"/>
<dbReference type="UniPathway" id="UPA00031">
    <property type="reaction ID" value="UER00011"/>
</dbReference>
<dbReference type="UniPathway" id="UPA00031">
    <property type="reaction ID" value="UER00013"/>
</dbReference>
<dbReference type="Proteomes" id="UP000002516">
    <property type="component" value="Chromosome"/>
</dbReference>
<dbReference type="GO" id="GO:0005737">
    <property type="term" value="C:cytoplasm"/>
    <property type="evidence" value="ECO:0007669"/>
    <property type="project" value="UniProtKB-SubCell"/>
</dbReference>
<dbReference type="GO" id="GO:0004401">
    <property type="term" value="F:histidinol-phosphatase activity"/>
    <property type="evidence" value="ECO:0007669"/>
    <property type="project" value="UniProtKB-UniRule"/>
</dbReference>
<dbReference type="GO" id="GO:0004424">
    <property type="term" value="F:imidazoleglycerol-phosphate dehydratase activity"/>
    <property type="evidence" value="ECO:0007669"/>
    <property type="project" value="UniProtKB-UniRule"/>
</dbReference>
<dbReference type="GO" id="GO:0046872">
    <property type="term" value="F:metal ion binding"/>
    <property type="evidence" value="ECO:0007669"/>
    <property type="project" value="UniProtKB-KW"/>
</dbReference>
<dbReference type="GO" id="GO:0000105">
    <property type="term" value="P:L-histidine biosynthetic process"/>
    <property type="evidence" value="ECO:0007669"/>
    <property type="project" value="UniProtKB-UniRule"/>
</dbReference>
<dbReference type="CDD" id="cd07503">
    <property type="entry name" value="HAD_HisB-N"/>
    <property type="match status" value="1"/>
</dbReference>
<dbReference type="CDD" id="cd07914">
    <property type="entry name" value="IGPD"/>
    <property type="match status" value="1"/>
</dbReference>
<dbReference type="FunFam" id="3.30.230.40:FF:000001">
    <property type="entry name" value="Imidazoleglycerol-phosphate dehydratase HisB"/>
    <property type="match status" value="1"/>
</dbReference>
<dbReference type="FunFam" id="3.30.230.40:FF:000003">
    <property type="entry name" value="Imidazoleglycerol-phosphate dehydratase HisB"/>
    <property type="match status" value="1"/>
</dbReference>
<dbReference type="Gene3D" id="3.40.50.1000">
    <property type="entry name" value="HAD superfamily/HAD-like"/>
    <property type="match status" value="1"/>
</dbReference>
<dbReference type="Gene3D" id="3.30.230.40">
    <property type="entry name" value="Imidazole glycerol phosphate dehydratase, domain 1"/>
    <property type="match status" value="2"/>
</dbReference>
<dbReference type="HAMAP" id="MF_01022">
    <property type="entry name" value="Bifunc_HisB"/>
    <property type="match status" value="1"/>
</dbReference>
<dbReference type="HAMAP" id="MF_00076">
    <property type="entry name" value="HisB"/>
    <property type="match status" value="1"/>
</dbReference>
<dbReference type="InterPro" id="IPR036412">
    <property type="entry name" value="HAD-like_sf"/>
</dbReference>
<dbReference type="InterPro" id="IPR006549">
    <property type="entry name" value="HAD-SF_hydro_IIIA"/>
</dbReference>
<dbReference type="InterPro" id="IPR023214">
    <property type="entry name" value="HAD_sf"/>
</dbReference>
<dbReference type="InterPro" id="IPR020566">
    <property type="entry name" value="His_synth_bifunc_HisB"/>
</dbReference>
<dbReference type="InterPro" id="IPR005954">
    <property type="entry name" value="HisB_N"/>
</dbReference>
<dbReference type="InterPro" id="IPR006543">
    <property type="entry name" value="Histidinol-phos"/>
</dbReference>
<dbReference type="InterPro" id="IPR038494">
    <property type="entry name" value="IGPD_sf"/>
</dbReference>
<dbReference type="InterPro" id="IPR000807">
    <property type="entry name" value="ImidazoleglycerolP_deHydtase"/>
</dbReference>
<dbReference type="InterPro" id="IPR020565">
    <property type="entry name" value="ImidazoleglycerP_deHydtase_CS"/>
</dbReference>
<dbReference type="InterPro" id="IPR020568">
    <property type="entry name" value="Ribosomal_Su5_D2-typ_SF"/>
</dbReference>
<dbReference type="NCBIfam" id="TIGR01662">
    <property type="entry name" value="HAD-SF-IIIA"/>
    <property type="match status" value="1"/>
</dbReference>
<dbReference type="NCBIfam" id="TIGR01261">
    <property type="entry name" value="hisB_Nterm"/>
    <property type="match status" value="1"/>
</dbReference>
<dbReference type="NCBIfam" id="TIGR01656">
    <property type="entry name" value="Histidinol-ppas"/>
    <property type="match status" value="1"/>
</dbReference>
<dbReference type="NCBIfam" id="NF003937">
    <property type="entry name" value="PRK05446.1"/>
    <property type="match status" value="1"/>
</dbReference>
<dbReference type="PANTHER" id="PTHR23133:SF2">
    <property type="entry name" value="IMIDAZOLEGLYCEROL-PHOSPHATE DEHYDRATASE"/>
    <property type="match status" value="1"/>
</dbReference>
<dbReference type="PANTHER" id="PTHR23133">
    <property type="entry name" value="IMIDAZOLEGLYCEROL-PHOSPHATE DEHYDRATASE HIS7"/>
    <property type="match status" value="1"/>
</dbReference>
<dbReference type="Pfam" id="PF13242">
    <property type="entry name" value="Hydrolase_like"/>
    <property type="match status" value="1"/>
</dbReference>
<dbReference type="Pfam" id="PF00475">
    <property type="entry name" value="IGPD"/>
    <property type="match status" value="1"/>
</dbReference>
<dbReference type="SUPFAM" id="SSF56784">
    <property type="entry name" value="HAD-like"/>
    <property type="match status" value="1"/>
</dbReference>
<dbReference type="SUPFAM" id="SSF54211">
    <property type="entry name" value="Ribosomal protein S5 domain 2-like"/>
    <property type="match status" value="2"/>
</dbReference>
<dbReference type="PROSITE" id="PS00954">
    <property type="entry name" value="IGP_DEHYDRATASE_1"/>
    <property type="match status" value="1"/>
</dbReference>
<dbReference type="PROSITE" id="PS00955">
    <property type="entry name" value="IGP_DEHYDRATASE_2"/>
    <property type="match status" value="1"/>
</dbReference>
<accession>Q87C31</accession>
<comment type="catalytic activity">
    <reaction evidence="1">
        <text>D-erythro-1-(imidazol-4-yl)glycerol 3-phosphate = 3-(imidazol-4-yl)-2-oxopropyl phosphate + H2O</text>
        <dbReference type="Rhea" id="RHEA:11040"/>
        <dbReference type="ChEBI" id="CHEBI:15377"/>
        <dbReference type="ChEBI" id="CHEBI:57766"/>
        <dbReference type="ChEBI" id="CHEBI:58278"/>
        <dbReference type="EC" id="4.2.1.19"/>
    </reaction>
</comment>
<comment type="catalytic activity">
    <reaction evidence="1">
        <text>L-histidinol phosphate + H2O = L-histidinol + phosphate</text>
        <dbReference type="Rhea" id="RHEA:14465"/>
        <dbReference type="ChEBI" id="CHEBI:15377"/>
        <dbReference type="ChEBI" id="CHEBI:43474"/>
        <dbReference type="ChEBI" id="CHEBI:57699"/>
        <dbReference type="ChEBI" id="CHEBI:57980"/>
        <dbReference type="EC" id="3.1.3.15"/>
    </reaction>
</comment>
<comment type="cofactor">
    <cofactor evidence="1">
        <name>Mg(2+)</name>
        <dbReference type="ChEBI" id="CHEBI:18420"/>
    </cofactor>
</comment>
<comment type="pathway">
    <text evidence="1">Amino-acid biosynthesis; L-histidine biosynthesis; L-histidine from 5-phospho-alpha-D-ribose 1-diphosphate: step 6/9.</text>
</comment>
<comment type="pathway">
    <text evidence="1">Amino-acid biosynthesis; L-histidine biosynthesis; L-histidine from 5-phospho-alpha-D-ribose 1-diphosphate: step 8/9.</text>
</comment>
<comment type="subcellular location">
    <subcellularLocation>
        <location evidence="1">Cytoplasm</location>
    </subcellularLocation>
</comment>
<comment type="similarity">
    <text evidence="1">In the N-terminal section; belongs to the histidinol-phosphatase family.</text>
</comment>
<comment type="similarity">
    <text evidence="1">In the C-terminal section; belongs to the imidazoleglycerol-phosphate dehydratase family.</text>
</comment>
<gene>
    <name evidence="1" type="primary">hisB</name>
    <name type="ordered locus">PD_1265</name>
</gene>
<reference key="1">
    <citation type="journal article" date="2003" name="J. Bacteriol.">
        <title>Comparative analyses of the complete genome sequences of Pierce's disease and citrus variegated chlorosis strains of Xylella fastidiosa.</title>
        <authorList>
            <person name="Van Sluys M.A."/>
            <person name="de Oliveira M.C."/>
            <person name="Monteiro-Vitorello C.B."/>
            <person name="Miyaki C.Y."/>
            <person name="Furlan L.R."/>
            <person name="Camargo L.E.A."/>
            <person name="da Silva A.C.R."/>
            <person name="Moon D.H."/>
            <person name="Takita M.A."/>
            <person name="Lemos E.G.M."/>
            <person name="Machado M.A."/>
            <person name="Ferro M.I.T."/>
            <person name="da Silva F.R."/>
            <person name="Goldman M.H.S."/>
            <person name="Goldman G.H."/>
            <person name="Lemos M.V.F."/>
            <person name="El-Dorry H."/>
            <person name="Tsai S.M."/>
            <person name="Carrer H."/>
            <person name="Carraro D.M."/>
            <person name="de Oliveira R.C."/>
            <person name="Nunes L.R."/>
            <person name="Siqueira W.J."/>
            <person name="Coutinho L.L."/>
            <person name="Kimura E.T."/>
            <person name="Ferro E.S."/>
            <person name="Harakava R."/>
            <person name="Kuramae E.E."/>
            <person name="Marino C.L."/>
            <person name="Giglioti E."/>
            <person name="Abreu I.L."/>
            <person name="Alves L.M.C."/>
            <person name="do Amaral A.M."/>
            <person name="Baia G.S."/>
            <person name="Blanco S.R."/>
            <person name="Brito M.S."/>
            <person name="Cannavan F.S."/>
            <person name="Celestino A.V."/>
            <person name="da Cunha A.F."/>
            <person name="Fenille R.C."/>
            <person name="Ferro J.A."/>
            <person name="Formighieri E.F."/>
            <person name="Kishi L.T."/>
            <person name="Leoni S.G."/>
            <person name="Oliveira A.R."/>
            <person name="Rosa V.E. Jr."/>
            <person name="Sassaki F.T."/>
            <person name="Sena J.A.D."/>
            <person name="de Souza A.A."/>
            <person name="Truffi D."/>
            <person name="Tsukumo F."/>
            <person name="Yanai G.M."/>
            <person name="Zaros L.G."/>
            <person name="Civerolo E.L."/>
            <person name="Simpson A.J.G."/>
            <person name="Almeida N.F. Jr."/>
            <person name="Setubal J.C."/>
            <person name="Kitajima J.P."/>
        </authorList>
    </citation>
    <scope>NUCLEOTIDE SEQUENCE [LARGE SCALE GENOMIC DNA]</scope>
    <source>
        <strain>Temecula1 / ATCC 700964</strain>
    </source>
</reference>
<name>HIS7_XYLFT</name>
<keyword id="KW-0028">Amino-acid biosynthesis</keyword>
<keyword id="KW-0963">Cytoplasm</keyword>
<keyword id="KW-0368">Histidine biosynthesis</keyword>
<keyword id="KW-0378">Hydrolase</keyword>
<keyword id="KW-0456">Lyase</keyword>
<keyword id="KW-0460">Magnesium</keyword>
<keyword id="KW-0479">Metal-binding</keyword>
<keyword id="KW-0511">Multifunctional enzyme</keyword>
<keyword id="KW-1185">Reference proteome</keyword>
<evidence type="ECO:0000255" key="1">
    <source>
        <dbReference type="HAMAP-Rule" id="MF_01022"/>
    </source>
</evidence>
<proteinExistence type="inferred from homology"/>
<sequence length="375" mass="41472">MTPIVFIDRDGTLIEEPPDFQIDAYEKLRLVNGVIPALLKLRDAGYHFVIVTNQDGLGSPTYPQASFDGPNALMLQIFSSQGIVFRDVLIDRSWPADNAPTRKPGIGLMVAYLQDRDIDWARSAMVGDRPTDLQFAENLNIRGFQLRTPQFGGDWDWDGIAHTLADAPRRAVVQRHTKETNIRVEIDLDGAPQARITTGLPFFDHMLEQIAKHAGISLHISAVGDLHIDEHHTIEDTGLALGQAVRQALGDKRGIGRYGFDPPQLPWQVSGAAAHGGFTLPMDETQASAVLDFSGRPYFVFEGTFVRERVGDMPTELVPHFFRSLCDASGMNLHLSVHGDNDHHKVEACFKALARALRQALQRHGHVLPSTKGAL</sequence>